<accession>Q30T61</accession>
<proteinExistence type="inferred from homology"/>
<dbReference type="EC" id="1.1.1.86" evidence="1"/>
<dbReference type="EMBL" id="CP000153">
    <property type="protein sequence ID" value="ABB43820.1"/>
    <property type="molecule type" value="Genomic_DNA"/>
</dbReference>
<dbReference type="RefSeq" id="WP_011372174.1">
    <property type="nucleotide sequence ID" value="NC_007575.1"/>
</dbReference>
<dbReference type="SMR" id="Q30T61"/>
<dbReference type="STRING" id="326298.Suden_0541"/>
<dbReference type="KEGG" id="tdn:Suden_0541"/>
<dbReference type="eggNOG" id="COG0059">
    <property type="taxonomic scope" value="Bacteria"/>
</dbReference>
<dbReference type="HOGENOM" id="CLU_033821_0_1_7"/>
<dbReference type="OrthoDB" id="9804088at2"/>
<dbReference type="UniPathway" id="UPA00047">
    <property type="reaction ID" value="UER00056"/>
</dbReference>
<dbReference type="UniPathway" id="UPA00049">
    <property type="reaction ID" value="UER00060"/>
</dbReference>
<dbReference type="Proteomes" id="UP000002714">
    <property type="component" value="Chromosome"/>
</dbReference>
<dbReference type="GO" id="GO:0005829">
    <property type="term" value="C:cytosol"/>
    <property type="evidence" value="ECO:0007669"/>
    <property type="project" value="TreeGrafter"/>
</dbReference>
<dbReference type="GO" id="GO:0004455">
    <property type="term" value="F:ketol-acid reductoisomerase activity"/>
    <property type="evidence" value="ECO:0007669"/>
    <property type="project" value="UniProtKB-UniRule"/>
</dbReference>
<dbReference type="GO" id="GO:0000287">
    <property type="term" value="F:magnesium ion binding"/>
    <property type="evidence" value="ECO:0007669"/>
    <property type="project" value="UniProtKB-UniRule"/>
</dbReference>
<dbReference type="GO" id="GO:0050661">
    <property type="term" value="F:NADP binding"/>
    <property type="evidence" value="ECO:0007669"/>
    <property type="project" value="InterPro"/>
</dbReference>
<dbReference type="GO" id="GO:0009097">
    <property type="term" value="P:isoleucine biosynthetic process"/>
    <property type="evidence" value="ECO:0007669"/>
    <property type="project" value="UniProtKB-UniRule"/>
</dbReference>
<dbReference type="GO" id="GO:0009099">
    <property type="term" value="P:L-valine biosynthetic process"/>
    <property type="evidence" value="ECO:0007669"/>
    <property type="project" value="UniProtKB-UniRule"/>
</dbReference>
<dbReference type="FunFam" id="3.40.50.720:FF:000023">
    <property type="entry name" value="Ketol-acid reductoisomerase (NADP(+))"/>
    <property type="match status" value="1"/>
</dbReference>
<dbReference type="Gene3D" id="6.10.240.10">
    <property type="match status" value="1"/>
</dbReference>
<dbReference type="Gene3D" id="3.40.50.720">
    <property type="entry name" value="NAD(P)-binding Rossmann-like Domain"/>
    <property type="match status" value="1"/>
</dbReference>
<dbReference type="HAMAP" id="MF_00435">
    <property type="entry name" value="IlvC"/>
    <property type="match status" value="1"/>
</dbReference>
<dbReference type="InterPro" id="IPR008927">
    <property type="entry name" value="6-PGluconate_DH-like_C_sf"/>
</dbReference>
<dbReference type="InterPro" id="IPR013023">
    <property type="entry name" value="KARI"/>
</dbReference>
<dbReference type="InterPro" id="IPR000506">
    <property type="entry name" value="KARI_C"/>
</dbReference>
<dbReference type="InterPro" id="IPR013116">
    <property type="entry name" value="KARI_N"/>
</dbReference>
<dbReference type="InterPro" id="IPR014359">
    <property type="entry name" value="KARI_prok"/>
</dbReference>
<dbReference type="InterPro" id="IPR036291">
    <property type="entry name" value="NAD(P)-bd_dom_sf"/>
</dbReference>
<dbReference type="NCBIfam" id="TIGR00465">
    <property type="entry name" value="ilvC"/>
    <property type="match status" value="1"/>
</dbReference>
<dbReference type="NCBIfam" id="NF004017">
    <property type="entry name" value="PRK05479.1"/>
    <property type="match status" value="1"/>
</dbReference>
<dbReference type="NCBIfam" id="NF009940">
    <property type="entry name" value="PRK13403.1"/>
    <property type="match status" value="1"/>
</dbReference>
<dbReference type="PANTHER" id="PTHR21371">
    <property type="entry name" value="KETOL-ACID REDUCTOISOMERASE, MITOCHONDRIAL"/>
    <property type="match status" value="1"/>
</dbReference>
<dbReference type="PANTHER" id="PTHR21371:SF1">
    <property type="entry name" value="KETOL-ACID REDUCTOISOMERASE, MITOCHONDRIAL"/>
    <property type="match status" value="1"/>
</dbReference>
<dbReference type="Pfam" id="PF01450">
    <property type="entry name" value="KARI_C"/>
    <property type="match status" value="1"/>
</dbReference>
<dbReference type="Pfam" id="PF07991">
    <property type="entry name" value="KARI_N"/>
    <property type="match status" value="1"/>
</dbReference>
<dbReference type="PIRSF" id="PIRSF000116">
    <property type="entry name" value="IlvC_gammaproteo"/>
    <property type="match status" value="1"/>
</dbReference>
<dbReference type="SUPFAM" id="SSF48179">
    <property type="entry name" value="6-phosphogluconate dehydrogenase C-terminal domain-like"/>
    <property type="match status" value="1"/>
</dbReference>
<dbReference type="SUPFAM" id="SSF51735">
    <property type="entry name" value="NAD(P)-binding Rossmann-fold domains"/>
    <property type="match status" value="1"/>
</dbReference>
<dbReference type="PROSITE" id="PS51851">
    <property type="entry name" value="KARI_C"/>
    <property type="match status" value="1"/>
</dbReference>
<dbReference type="PROSITE" id="PS51850">
    <property type="entry name" value="KARI_N"/>
    <property type="match status" value="1"/>
</dbReference>
<sequence>MTVYYDKDCNINLIKSKKVAMIGFGSQGHAHAENLRDSGVEVVVGLRKDGSSWAKAEAKGFKVMTVGDASAYADLIMILLPDENQAEIYKDEIEPNLKNGATIAFGHGFNIHYGRIHPRADINVTMIAPKAPGHTVRSEFVRGGGIPDLIAVGQNPSGNTRELALSYASAIGGGRTAIIETTFKDETETDLFGEQAVLCGGAVSLVQAGFETLTEAGYAPELAYFECLHELKLIVDLMFQGGIADMRYSISNTAEYGDYVSGKRVINAESKAAMREILKEIQDGRFAKDFILEGQSGYPRMNAERANAKASLIEQTGVKLRTMMPWIAANKIVDTSKN</sequence>
<reference key="1">
    <citation type="journal article" date="2008" name="Appl. Environ. Microbiol.">
        <title>Genome of the epsilonproteobacterial chemolithoautotroph Sulfurimonas denitrificans.</title>
        <authorList>
            <person name="Sievert S.M."/>
            <person name="Scott K.M."/>
            <person name="Klotz M.G."/>
            <person name="Chain P.S.G."/>
            <person name="Hauser L.J."/>
            <person name="Hemp J."/>
            <person name="Huegler M."/>
            <person name="Land M."/>
            <person name="Lapidus A."/>
            <person name="Larimer F.W."/>
            <person name="Lucas S."/>
            <person name="Malfatti S.A."/>
            <person name="Meyer F."/>
            <person name="Paulsen I.T."/>
            <person name="Ren Q."/>
            <person name="Simon J."/>
            <person name="Bailey K."/>
            <person name="Diaz E."/>
            <person name="Fitzpatrick K.A."/>
            <person name="Glover B."/>
            <person name="Gwatney N."/>
            <person name="Korajkic A."/>
            <person name="Long A."/>
            <person name="Mobberley J.M."/>
            <person name="Pantry S.N."/>
            <person name="Pazder G."/>
            <person name="Peterson S."/>
            <person name="Quintanilla J.D."/>
            <person name="Sprinkle R."/>
            <person name="Stephens J."/>
            <person name="Thomas P."/>
            <person name="Vaughn R."/>
            <person name="Weber M.J."/>
            <person name="Wooten L.L."/>
        </authorList>
    </citation>
    <scope>NUCLEOTIDE SEQUENCE [LARGE SCALE GENOMIC DNA]</scope>
    <source>
        <strain>ATCC 33889 / DSM 1251</strain>
    </source>
</reference>
<evidence type="ECO:0000255" key="1">
    <source>
        <dbReference type="HAMAP-Rule" id="MF_00435"/>
    </source>
</evidence>
<evidence type="ECO:0000255" key="2">
    <source>
        <dbReference type="PROSITE-ProRule" id="PRU01197"/>
    </source>
</evidence>
<evidence type="ECO:0000255" key="3">
    <source>
        <dbReference type="PROSITE-ProRule" id="PRU01198"/>
    </source>
</evidence>
<feature type="chain" id="PRO_0000252799" description="Ketol-acid reductoisomerase (NADP(+))">
    <location>
        <begin position="1"/>
        <end position="338"/>
    </location>
</feature>
<feature type="domain" description="KARI N-terminal Rossmann" evidence="2">
    <location>
        <begin position="1"/>
        <end position="181"/>
    </location>
</feature>
<feature type="domain" description="KARI C-terminal knotted" evidence="3">
    <location>
        <begin position="182"/>
        <end position="327"/>
    </location>
</feature>
<feature type="active site" evidence="1">
    <location>
        <position position="107"/>
    </location>
</feature>
<feature type="binding site" evidence="1">
    <location>
        <begin position="24"/>
        <end position="27"/>
    </location>
    <ligand>
        <name>NADP(+)</name>
        <dbReference type="ChEBI" id="CHEBI:58349"/>
    </ligand>
</feature>
<feature type="binding site" evidence="1">
    <location>
        <position position="47"/>
    </location>
    <ligand>
        <name>NADP(+)</name>
        <dbReference type="ChEBI" id="CHEBI:58349"/>
    </ligand>
</feature>
<feature type="binding site" evidence="1">
    <location>
        <position position="52"/>
    </location>
    <ligand>
        <name>NADP(+)</name>
        <dbReference type="ChEBI" id="CHEBI:58349"/>
    </ligand>
</feature>
<feature type="binding site" evidence="1">
    <location>
        <begin position="82"/>
        <end position="85"/>
    </location>
    <ligand>
        <name>NADP(+)</name>
        <dbReference type="ChEBI" id="CHEBI:58349"/>
    </ligand>
</feature>
<feature type="binding site" evidence="1">
    <location>
        <position position="133"/>
    </location>
    <ligand>
        <name>NADP(+)</name>
        <dbReference type="ChEBI" id="CHEBI:58349"/>
    </ligand>
</feature>
<feature type="binding site" evidence="1">
    <location>
        <position position="190"/>
    </location>
    <ligand>
        <name>Mg(2+)</name>
        <dbReference type="ChEBI" id="CHEBI:18420"/>
        <label>1</label>
    </ligand>
</feature>
<feature type="binding site" evidence="1">
    <location>
        <position position="190"/>
    </location>
    <ligand>
        <name>Mg(2+)</name>
        <dbReference type="ChEBI" id="CHEBI:18420"/>
        <label>2</label>
    </ligand>
</feature>
<feature type="binding site" evidence="1">
    <location>
        <position position="194"/>
    </location>
    <ligand>
        <name>Mg(2+)</name>
        <dbReference type="ChEBI" id="CHEBI:18420"/>
        <label>1</label>
    </ligand>
</feature>
<feature type="binding site" evidence="1">
    <location>
        <position position="226"/>
    </location>
    <ligand>
        <name>Mg(2+)</name>
        <dbReference type="ChEBI" id="CHEBI:18420"/>
        <label>2</label>
    </ligand>
</feature>
<feature type="binding site" evidence="1">
    <location>
        <position position="230"/>
    </location>
    <ligand>
        <name>Mg(2+)</name>
        <dbReference type="ChEBI" id="CHEBI:18420"/>
        <label>2</label>
    </ligand>
</feature>
<feature type="binding site" evidence="1">
    <location>
        <position position="251"/>
    </location>
    <ligand>
        <name>substrate</name>
    </ligand>
</feature>
<gene>
    <name evidence="1" type="primary">ilvC</name>
    <name type="ordered locus">Suden_0541</name>
</gene>
<organism>
    <name type="scientific">Sulfurimonas denitrificans (strain ATCC 33889 / DSM 1251)</name>
    <name type="common">Thiomicrospira denitrificans (strain ATCC 33889 / DSM 1251)</name>
    <dbReference type="NCBI Taxonomy" id="326298"/>
    <lineage>
        <taxon>Bacteria</taxon>
        <taxon>Pseudomonadati</taxon>
        <taxon>Campylobacterota</taxon>
        <taxon>Epsilonproteobacteria</taxon>
        <taxon>Campylobacterales</taxon>
        <taxon>Sulfurimonadaceae</taxon>
        <taxon>Sulfurimonas</taxon>
    </lineage>
</organism>
<protein>
    <recommendedName>
        <fullName evidence="1">Ketol-acid reductoisomerase (NADP(+))</fullName>
        <shortName evidence="1">KARI</shortName>
        <ecNumber evidence="1">1.1.1.86</ecNumber>
    </recommendedName>
    <alternativeName>
        <fullName evidence="1">Acetohydroxy-acid isomeroreductase</fullName>
        <shortName evidence="1">AHIR</shortName>
    </alternativeName>
    <alternativeName>
        <fullName evidence="1">Alpha-keto-beta-hydroxylacyl reductoisomerase</fullName>
    </alternativeName>
    <alternativeName>
        <fullName evidence="1">Ketol-acid reductoisomerase type 1</fullName>
    </alternativeName>
    <alternativeName>
        <fullName evidence="1">Ketol-acid reductoisomerase type I</fullName>
    </alternativeName>
</protein>
<name>ILVC_SULDN</name>
<comment type="function">
    <text evidence="1">Involved in the biosynthesis of branched-chain amino acids (BCAA). Catalyzes an alkyl-migration followed by a ketol-acid reduction of (S)-2-acetolactate (S2AL) to yield (R)-2,3-dihydroxy-isovalerate. In the isomerase reaction, S2AL is rearranged via a Mg-dependent methyl migration to produce 3-hydroxy-3-methyl-2-ketobutyrate (HMKB). In the reductase reaction, this 2-ketoacid undergoes a metal-dependent reduction by NADPH to yield (R)-2,3-dihydroxy-isovalerate.</text>
</comment>
<comment type="catalytic activity">
    <reaction evidence="1">
        <text>(2R)-2,3-dihydroxy-3-methylbutanoate + NADP(+) = (2S)-2-acetolactate + NADPH + H(+)</text>
        <dbReference type="Rhea" id="RHEA:22068"/>
        <dbReference type="ChEBI" id="CHEBI:15378"/>
        <dbReference type="ChEBI" id="CHEBI:49072"/>
        <dbReference type="ChEBI" id="CHEBI:57783"/>
        <dbReference type="ChEBI" id="CHEBI:58349"/>
        <dbReference type="ChEBI" id="CHEBI:58476"/>
        <dbReference type="EC" id="1.1.1.86"/>
    </reaction>
</comment>
<comment type="catalytic activity">
    <reaction evidence="1">
        <text>(2R,3R)-2,3-dihydroxy-3-methylpentanoate + NADP(+) = (S)-2-ethyl-2-hydroxy-3-oxobutanoate + NADPH + H(+)</text>
        <dbReference type="Rhea" id="RHEA:13493"/>
        <dbReference type="ChEBI" id="CHEBI:15378"/>
        <dbReference type="ChEBI" id="CHEBI:49256"/>
        <dbReference type="ChEBI" id="CHEBI:49258"/>
        <dbReference type="ChEBI" id="CHEBI:57783"/>
        <dbReference type="ChEBI" id="CHEBI:58349"/>
        <dbReference type="EC" id="1.1.1.86"/>
    </reaction>
</comment>
<comment type="cofactor">
    <cofactor evidence="1">
        <name>Mg(2+)</name>
        <dbReference type="ChEBI" id="CHEBI:18420"/>
    </cofactor>
    <text evidence="1">Binds 2 magnesium ions per subunit.</text>
</comment>
<comment type="pathway">
    <text evidence="1">Amino-acid biosynthesis; L-isoleucine biosynthesis; L-isoleucine from 2-oxobutanoate: step 2/4.</text>
</comment>
<comment type="pathway">
    <text evidence="1">Amino-acid biosynthesis; L-valine biosynthesis; L-valine from pyruvate: step 2/4.</text>
</comment>
<comment type="similarity">
    <text evidence="1">Belongs to the ketol-acid reductoisomerase family.</text>
</comment>
<keyword id="KW-0028">Amino-acid biosynthesis</keyword>
<keyword id="KW-0100">Branched-chain amino acid biosynthesis</keyword>
<keyword id="KW-0460">Magnesium</keyword>
<keyword id="KW-0479">Metal-binding</keyword>
<keyword id="KW-0521">NADP</keyword>
<keyword id="KW-0560">Oxidoreductase</keyword>
<keyword id="KW-1185">Reference proteome</keyword>